<keyword id="KW-0131">Cell cycle</keyword>
<keyword id="KW-0132">Cell division</keyword>
<keyword id="KW-0158">Chromosome</keyword>
<keyword id="KW-0195">Cyclin</keyword>
<keyword id="KW-0217">Developmental protein</keyword>
<keyword id="KW-0227">DNA damage</keyword>
<keyword id="KW-0234">DNA repair</keyword>
<keyword id="KW-0238">DNA-binding</keyword>
<keyword id="KW-0341">Growth regulation</keyword>
<keyword id="KW-0469">Meiosis</keyword>
<keyword id="KW-1185">Reference proteome</keyword>
<keyword id="KW-0804">Transcription</keyword>
<keyword id="KW-0805">Transcription regulation</keyword>
<proteinExistence type="evidence at protein level"/>
<reference evidence="14" key="1">
    <citation type="journal article" date="2000" name="Science">
        <title>The genome sequence of Drosophila melanogaster.</title>
        <authorList>
            <person name="Adams M.D."/>
            <person name="Celniker S.E."/>
            <person name="Holt R.A."/>
            <person name="Evans C.A."/>
            <person name="Gocayne J.D."/>
            <person name="Amanatides P.G."/>
            <person name="Scherer S.E."/>
            <person name="Li P.W."/>
            <person name="Hoskins R.A."/>
            <person name="Galle R.F."/>
            <person name="George R.A."/>
            <person name="Lewis S.E."/>
            <person name="Richards S."/>
            <person name="Ashburner M."/>
            <person name="Henderson S.N."/>
            <person name="Sutton G.G."/>
            <person name="Wortman J.R."/>
            <person name="Yandell M.D."/>
            <person name="Zhang Q."/>
            <person name="Chen L.X."/>
            <person name="Brandon R.C."/>
            <person name="Rogers Y.-H.C."/>
            <person name="Blazej R.G."/>
            <person name="Champe M."/>
            <person name="Pfeiffer B.D."/>
            <person name="Wan K.H."/>
            <person name="Doyle C."/>
            <person name="Baxter E.G."/>
            <person name="Helt G."/>
            <person name="Nelson C.R."/>
            <person name="Miklos G.L.G."/>
            <person name="Abril J.F."/>
            <person name="Agbayani A."/>
            <person name="An H.-J."/>
            <person name="Andrews-Pfannkoch C."/>
            <person name="Baldwin D."/>
            <person name="Ballew R.M."/>
            <person name="Basu A."/>
            <person name="Baxendale J."/>
            <person name="Bayraktaroglu L."/>
            <person name="Beasley E.M."/>
            <person name="Beeson K.Y."/>
            <person name="Benos P.V."/>
            <person name="Berman B.P."/>
            <person name="Bhandari D."/>
            <person name="Bolshakov S."/>
            <person name="Borkova D."/>
            <person name="Botchan M.R."/>
            <person name="Bouck J."/>
            <person name="Brokstein P."/>
            <person name="Brottier P."/>
            <person name="Burtis K.C."/>
            <person name="Busam D.A."/>
            <person name="Butler H."/>
            <person name="Cadieu E."/>
            <person name="Center A."/>
            <person name="Chandra I."/>
            <person name="Cherry J.M."/>
            <person name="Cawley S."/>
            <person name="Dahlke C."/>
            <person name="Davenport L.B."/>
            <person name="Davies P."/>
            <person name="de Pablos B."/>
            <person name="Delcher A."/>
            <person name="Deng Z."/>
            <person name="Mays A.D."/>
            <person name="Dew I."/>
            <person name="Dietz S.M."/>
            <person name="Dodson K."/>
            <person name="Doup L.E."/>
            <person name="Downes M."/>
            <person name="Dugan-Rocha S."/>
            <person name="Dunkov B.C."/>
            <person name="Dunn P."/>
            <person name="Durbin K.J."/>
            <person name="Evangelista C.C."/>
            <person name="Ferraz C."/>
            <person name="Ferriera S."/>
            <person name="Fleischmann W."/>
            <person name="Fosler C."/>
            <person name="Gabrielian A.E."/>
            <person name="Garg N.S."/>
            <person name="Gelbart W.M."/>
            <person name="Glasser K."/>
            <person name="Glodek A."/>
            <person name="Gong F."/>
            <person name="Gorrell J.H."/>
            <person name="Gu Z."/>
            <person name="Guan P."/>
            <person name="Harris M."/>
            <person name="Harris N.L."/>
            <person name="Harvey D.A."/>
            <person name="Heiman T.J."/>
            <person name="Hernandez J.R."/>
            <person name="Houck J."/>
            <person name="Hostin D."/>
            <person name="Houston K.A."/>
            <person name="Howland T.J."/>
            <person name="Wei M.-H."/>
            <person name="Ibegwam C."/>
            <person name="Jalali M."/>
            <person name="Kalush F."/>
            <person name="Karpen G.H."/>
            <person name="Ke Z."/>
            <person name="Kennison J.A."/>
            <person name="Ketchum K.A."/>
            <person name="Kimmel B.E."/>
            <person name="Kodira C.D."/>
            <person name="Kraft C.L."/>
            <person name="Kravitz S."/>
            <person name="Kulp D."/>
            <person name="Lai Z."/>
            <person name="Lasko P."/>
            <person name="Lei Y."/>
            <person name="Levitsky A.A."/>
            <person name="Li J.H."/>
            <person name="Li Z."/>
            <person name="Liang Y."/>
            <person name="Lin X."/>
            <person name="Liu X."/>
            <person name="Mattei B."/>
            <person name="McIntosh T.C."/>
            <person name="McLeod M.P."/>
            <person name="McPherson D."/>
            <person name="Merkulov G."/>
            <person name="Milshina N.V."/>
            <person name="Mobarry C."/>
            <person name="Morris J."/>
            <person name="Moshrefi A."/>
            <person name="Mount S.M."/>
            <person name="Moy M."/>
            <person name="Murphy B."/>
            <person name="Murphy L."/>
            <person name="Muzny D.M."/>
            <person name="Nelson D.L."/>
            <person name="Nelson D.R."/>
            <person name="Nelson K.A."/>
            <person name="Nixon K."/>
            <person name="Nusskern D.R."/>
            <person name="Pacleb J.M."/>
            <person name="Palazzolo M."/>
            <person name="Pittman G.S."/>
            <person name="Pan S."/>
            <person name="Pollard J."/>
            <person name="Puri V."/>
            <person name="Reese M.G."/>
            <person name="Reinert K."/>
            <person name="Remington K."/>
            <person name="Saunders R.D.C."/>
            <person name="Scheeler F."/>
            <person name="Shen H."/>
            <person name="Shue B.C."/>
            <person name="Siden-Kiamos I."/>
            <person name="Simpson M."/>
            <person name="Skupski M.P."/>
            <person name="Smith T.J."/>
            <person name="Spier E."/>
            <person name="Spradling A.C."/>
            <person name="Stapleton M."/>
            <person name="Strong R."/>
            <person name="Sun E."/>
            <person name="Svirskas R."/>
            <person name="Tector C."/>
            <person name="Turner R."/>
            <person name="Venter E."/>
            <person name="Wang A.H."/>
            <person name="Wang X."/>
            <person name="Wang Z.-Y."/>
            <person name="Wassarman D.A."/>
            <person name="Weinstock G.M."/>
            <person name="Weissenbach J."/>
            <person name="Williams S.M."/>
            <person name="Woodage T."/>
            <person name="Worley K.C."/>
            <person name="Wu D."/>
            <person name="Yang S."/>
            <person name="Yao Q.A."/>
            <person name="Ye J."/>
            <person name="Yeh R.-F."/>
            <person name="Zaveri J.S."/>
            <person name="Zhan M."/>
            <person name="Zhang G."/>
            <person name="Zhao Q."/>
            <person name="Zheng L."/>
            <person name="Zheng X.H."/>
            <person name="Zhong F.N."/>
            <person name="Zhong W."/>
            <person name="Zhou X."/>
            <person name="Zhu S.C."/>
            <person name="Zhu X."/>
            <person name="Smith H.O."/>
            <person name="Gibbs R.A."/>
            <person name="Myers E.W."/>
            <person name="Rubin G.M."/>
            <person name="Venter J.C."/>
        </authorList>
    </citation>
    <scope>NUCLEOTIDE SEQUENCE [LARGE SCALE GENOMIC DNA]</scope>
    <source>
        <strain evidence="14">Berkeley</strain>
    </source>
</reference>
<reference evidence="14" key="2">
    <citation type="journal article" date="2002" name="Genome Biol.">
        <title>Annotation of the Drosophila melanogaster euchromatic genome: a systematic review.</title>
        <authorList>
            <person name="Misra S."/>
            <person name="Crosby M.A."/>
            <person name="Mungall C.J."/>
            <person name="Matthews B.B."/>
            <person name="Campbell K.S."/>
            <person name="Hradecky P."/>
            <person name="Huang Y."/>
            <person name="Kaminker J.S."/>
            <person name="Millburn G.H."/>
            <person name="Prochnik S.E."/>
            <person name="Smith C.D."/>
            <person name="Tupy J.L."/>
            <person name="Whitfield E.J."/>
            <person name="Bayraktaroglu L."/>
            <person name="Berman B.P."/>
            <person name="Bettencourt B.R."/>
            <person name="Celniker S.E."/>
            <person name="de Grey A.D.N.J."/>
            <person name="Drysdale R.A."/>
            <person name="Harris N.L."/>
            <person name="Richter J."/>
            <person name="Russo S."/>
            <person name="Schroeder A.J."/>
            <person name="Shu S.Q."/>
            <person name="Stapleton M."/>
            <person name="Yamada C."/>
            <person name="Ashburner M."/>
            <person name="Gelbart W.M."/>
            <person name="Rubin G.M."/>
            <person name="Lewis S.E."/>
        </authorList>
    </citation>
    <scope>GENOME REANNOTATION</scope>
    <source>
        <strain evidence="14">Berkeley</strain>
    </source>
</reference>
<reference evidence="12" key="3">
    <citation type="journal article" date="2002" name="Genome Biol.">
        <title>A Drosophila full-length cDNA resource.</title>
        <authorList>
            <person name="Stapleton M."/>
            <person name="Carlson J.W."/>
            <person name="Brokstein P."/>
            <person name="Yu C."/>
            <person name="Champe M."/>
            <person name="George R.A."/>
            <person name="Guarin H."/>
            <person name="Kronmiller B."/>
            <person name="Pacleb J.M."/>
            <person name="Park S."/>
            <person name="Wan K.H."/>
            <person name="Rubin G.M."/>
            <person name="Celniker S.E."/>
        </authorList>
    </citation>
    <scope>NUCLEOTIDE SEQUENCE [LARGE SCALE MRNA]</scope>
    <source>
        <strain evidence="12">Berkeley</strain>
        <tissue evidence="12">Embryo</tissue>
    </source>
</reference>
<reference evidence="11" key="4">
    <citation type="journal article" date="2008" name="Hereditas">
        <title>Regulation of Abd-B expression by Cyclin G and Corto in the abdominal epithelium of Drosophila.</title>
        <authorList>
            <person name="Salvaing J."/>
            <person name="Mouchel-Vielh E."/>
            <person name="Bloyer S."/>
            <person name="Preiss A."/>
            <person name="Peronnet F."/>
        </authorList>
    </citation>
    <scope>FUNCTION</scope>
</reference>
<reference evidence="11" key="5">
    <citation type="journal article" date="2008" name="PLoS ONE">
        <title>The enhancer of trithorax and polycomb corto interacts with cyclin G in Drosophila.</title>
        <authorList>
            <person name="Salvaing J."/>
            <person name="Nagel A.C."/>
            <person name="Mouchel-Vielh E."/>
            <person name="Bloyer S."/>
            <person name="Maier D."/>
            <person name="Preiss A."/>
            <person name="Peronnet F."/>
        </authorList>
    </citation>
    <scope>FUNCTION</scope>
    <scope>INTERACTION WITH CORTO</scope>
    <scope>SUBCELLULAR LOCATION</scope>
    <scope>DEVELOPMENTAL STAGE</scope>
</reference>
<reference evidence="11" key="6">
    <citation type="journal article" date="2011" name="Cell Cycle">
        <title>Drosophila melanogaster Cyclin G coordinates cell growth and cell proliferation.</title>
        <authorList>
            <person name="Faradji F."/>
            <person name="Bloyer S."/>
            <person name="Dardalhon-Cumenal D."/>
            <person name="Randsholt N.B."/>
            <person name="Peronnet F."/>
        </authorList>
    </citation>
    <scope>FUNCTION</scope>
    <scope>INTERACTION WITH CDK2 AND CDK4</scope>
    <scope>DEVELOPMENTAL STAGE</scope>
</reference>
<reference evidence="11" key="7">
    <citation type="journal article" date="2011" name="PLoS Genet.">
        <title>Developmental stability: a major role for cyclin G in drosophila melanogaster.</title>
        <authorList>
            <person name="Debat V."/>
            <person name="Bloyer S."/>
            <person name="Faradji F."/>
            <person name="Gidaszewski N."/>
            <person name="Navarro N."/>
            <person name="Orozco-Terwengel P."/>
            <person name="Ribeiro V."/>
            <person name="Schloetterer C."/>
            <person name="Deutsch J.S."/>
            <person name="Peronnet F."/>
        </authorList>
    </citation>
    <scope>FUNCTION</scope>
</reference>
<reference evidence="11" key="8">
    <citation type="journal article" date="2012" name="Hereditas">
        <title>Dorso-ventral axis formation of the Drosophila oocyte requires Cyclin G.</title>
        <authorList>
            <person name="Nagel A.C."/>
            <person name="Szawinski J."/>
            <person name="Fischer P."/>
            <person name="Maier D."/>
            <person name="Wech I."/>
            <person name="Preiss A."/>
        </authorList>
    </citation>
    <scope>FUNCTION</scope>
    <scope>DISRUPTION PHENOTYPE</scope>
</reference>
<reference evidence="11" key="9">
    <citation type="journal article" date="2012" name="J. Cell Sci.">
        <title>Cyclin G is involved in meiotic recombination repair in Drosophila melanogaster.</title>
        <authorList>
            <person name="Nagel A.C."/>
            <person name="Fischer P."/>
            <person name="Szawinski J."/>
            <person name="La Rosa M.K."/>
            <person name="Preiss A."/>
        </authorList>
    </citation>
    <scope>FUNCTION</scope>
    <scope>INTERACTION WITH BRCA2 AND RAD9</scope>
    <scope>DISRUPTION PHENOTYPE</scope>
</reference>
<reference evidence="11" key="10">
    <citation type="journal article" date="2015" name="Epigenetics Chromatin">
        <title>Drosophila Cyclin G and epigenetic maintenance of gene expression during development.</title>
        <authorList>
            <person name="Dupont C.A."/>
            <person name="Dardalhon-Cumenal D."/>
            <person name="Kyba M."/>
            <person name="Brock H.W."/>
            <person name="Randsholt N.B."/>
            <person name="Peronnet F."/>
        </authorList>
    </citation>
    <scope>FUNCTION</scope>
    <scope>INTERACTION WITH ASX</scope>
    <scope>SUBCELLULAR LOCATION</scope>
</reference>
<reference evidence="11" key="11">
    <citation type="journal article" date="2015" name="PLoS Genet.">
        <title>Cyclin G functions as a positive regulator of growth and metabolism in Drosophila.</title>
        <authorList>
            <person name="Fischer P."/>
            <person name="La Rosa M.K."/>
            <person name="Schulz A."/>
            <person name="Preiss A."/>
            <person name="Nagel A.C."/>
        </authorList>
    </citation>
    <scope>FUNCTION</scope>
    <scope>INTERACTION WITH WDB</scope>
    <scope>DISRUPTION PHENOTYPE</scope>
</reference>
<comment type="function">
    <text evidence="2 3 4 5 6 7 8 9">Cyclin with roles in multiple processes including transcription, meiotic recombination repair, cell cycle regulation, and promotion of normal growth and metabolism (PubMed:18286205, PubMed:18667003, PubMed:21311225, PubMed:22976300, PubMed:25995770, PubMed:26274446). Binds to the promoter region of the homeobox gene Abd-B and is involved in maintaining Abd-B expression in the pupal epithelium (PubMed:18286205, PubMed:18667003). Involved in the transcriptional repression of the homeotic genes Scr and Ubx (PubMed:25995770). Plays a role in meiotic recombination repair of DNA double-strand breaks which ensures efficient translation of grk and promotes grk activity in the oocyte, leading to oocyte dorso-ventral axis formation following secretion of grk from the oocyte and its binding to Egfr in the directly overlying follicle cells (PubMed:22976300, PubMed:23121330). Negatively regulates the binding of serine/threonine-protein kinase Akt1 to the protein phosphatase 2A subunit wdb, promoting normal growth and metabolism (PubMed:26274446). Required for the formation of bilateral symmetry (PubMed:21998598). Negatively regulates cell cycle progression by preventing G1 to S transition and retarding S-phase progression (PubMed:21311225).</text>
</comment>
<comment type="subunit">
    <text evidence="2 4 6 8 9">Interacts with corto (PubMed:18286205). Interacts with the cyclin-dependent kinases Cdk2 and Cdk4 (PubMed:21311225). Interacts with Brca2 and Rad9 (PubMed:22976300). Interacts with polycomb protein Asx (PubMed:25995770). Interacts with protein phosphatase 2A subunit wdb (PubMed:26274446).</text>
</comment>
<comment type="interaction">
    <interactant intactId="EBI-458558">
        <id>Q95TJ9</id>
    </interactant>
    <interactant intactId="EBI-103072">
        <id>Q9VB23</id>
        <label>wdb</label>
    </interactant>
    <organismsDiffer>false</organismsDiffer>
    <experiments>6</experiments>
</comment>
<comment type="subcellular location">
    <subcellularLocation>
        <location evidence="2 8">Chromosome</location>
    </subcellularLocation>
    <text evidence="8">Localizes mainly on active chromatin.</text>
</comment>
<comment type="developmental stage">
    <text evidence="2 4">Expressed throughout all stages of the cell cycle (at protein level) (PubMed:21311225). Expressed throughout development with notably less expression in third instar larva than in embryo or adult (PubMed:18286205).</text>
</comment>
<comment type="disruption phenotype">
    <text evidence="6 7 9">Viable but females are sterile and produce eggs with a ventralized phenotype where the dorsal respiratory appendages are fused (PubMed:22976300, PubMed:23121330). Reduced levels of grk protein in the oocyte cytoplasm and very low levels in follicle cells and in the extracellular space separating the oocyte from the follicular epithelium but no effect on grk transcription (PubMed:23121330). Increased incidence of DNA double-strand breaks in mutant germaria (PubMed:22976300). Reduced body size and weight and reduced cell size and number with mutants showing signs of starvation under normal feeding conditions and disturbed fat metabolism marked by elevated levels of stored fat (PubMed:26274446). Reduced phosphorylation levels of Akt1, Thor/4E-BP and S6k (PubMed:26274446). Accumulation of insulin-like peptide Ilp5 in larval brains is reduced to levels comparable to starved control animals (PubMed:26274446).</text>
</comment>
<comment type="similarity">
    <text evidence="11">Belongs to the cyclin family. Cyclin G subfamily.</text>
</comment>
<dbReference type="EMBL" id="AE014297">
    <property type="protein sequence ID" value="AAF57168.2"/>
    <property type="molecule type" value="Genomic_DNA"/>
</dbReference>
<dbReference type="EMBL" id="AE014297">
    <property type="protein sequence ID" value="AAF57169.2"/>
    <property type="molecule type" value="Genomic_DNA"/>
</dbReference>
<dbReference type="EMBL" id="AE014297">
    <property type="protein sequence ID" value="AAF57170.2"/>
    <property type="molecule type" value="Genomic_DNA"/>
</dbReference>
<dbReference type="EMBL" id="AE014297">
    <property type="protein sequence ID" value="AAF57171.2"/>
    <property type="molecule type" value="Genomic_DNA"/>
</dbReference>
<dbReference type="EMBL" id="AE014297">
    <property type="protein sequence ID" value="AGB96525.1"/>
    <property type="molecule type" value="Genomic_DNA"/>
</dbReference>
<dbReference type="EMBL" id="AY058720">
    <property type="protein sequence ID" value="AAL13949.1"/>
    <property type="molecule type" value="mRNA"/>
</dbReference>
<dbReference type="RefSeq" id="NP_001263146.1">
    <property type="nucleotide sequence ID" value="NM_001276217.2"/>
</dbReference>
<dbReference type="RefSeq" id="NP_524609.2">
    <property type="nucleotide sequence ID" value="NM_079870.4"/>
</dbReference>
<dbReference type="RefSeq" id="NP_733434.1">
    <property type="nucleotide sequence ID" value="NM_170555.3"/>
</dbReference>
<dbReference type="RefSeq" id="NP_733435.1">
    <property type="nucleotide sequence ID" value="NM_170556.3"/>
</dbReference>
<dbReference type="RefSeq" id="NP_733436.1">
    <property type="nucleotide sequence ID" value="NM_170557.3"/>
</dbReference>
<dbReference type="FunCoup" id="Q95TJ9">
    <property type="interactions" value="916"/>
</dbReference>
<dbReference type="IntAct" id="Q95TJ9">
    <property type="interactions" value="75"/>
</dbReference>
<dbReference type="STRING" id="7227.FBpp0305520"/>
<dbReference type="iPTMnet" id="Q95TJ9"/>
<dbReference type="PaxDb" id="7227-FBpp0305520"/>
<dbReference type="DNASU" id="43724"/>
<dbReference type="EnsemblMetazoa" id="FBtr0085799">
    <property type="protein sequence ID" value="FBpp0085160"/>
    <property type="gene ID" value="FBgn0039858"/>
</dbReference>
<dbReference type="EnsemblMetazoa" id="FBtr0085800">
    <property type="protein sequence ID" value="FBpp0085161"/>
    <property type="gene ID" value="FBgn0039858"/>
</dbReference>
<dbReference type="EnsemblMetazoa" id="FBtr0085802">
    <property type="protein sequence ID" value="FBpp0085163"/>
    <property type="gene ID" value="FBgn0039858"/>
</dbReference>
<dbReference type="EnsemblMetazoa" id="FBtr0085803">
    <property type="protein sequence ID" value="FBpp0085164"/>
    <property type="gene ID" value="FBgn0039858"/>
</dbReference>
<dbReference type="EnsemblMetazoa" id="FBtr0333328">
    <property type="protein sequence ID" value="FBpp0305520"/>
    <property type="gene ID" value="FBgn0039858"/>
</dbReference>
<dbReference type="GeneID" id="43724"/>
<dbReference type="KEGG" id="dme:Dmel_CG11525"/>
<dbReference type="UCSC" id="CG11525-RA">
    <property type="organism name" value="d. melanogaster"/>
</dbReference>
<dbReference type="AGR" id="FB:FBgn0039858"/>
<dbReference type="CTD" id="43724"/>
<dbReference type="FlyBase" id="FBgn0039858">
    <property type="gene designation" value="CycG"/>
</dbReference>
<dbReference type="VEuPathDB" id="VectorBase:FBgn0039858"/>
<dbReference type="eggNOG" id="KOG0653">
    <property type="taxonomic scope" value="Eukaryota"/>
</dbReference>
<dbReference type="HOGENOM" id="CLU_471956_0_0_1"/>
<dbReference type="InParanoid" id="Q95TJ9"/>
<dbReference type="OMA" id="YQKYDQQ"/>
<dbReference type="OrthoDB" id="769138at2759"/>
<dbReference type="PhylomeDB" id="Q95TJ9"/>
<dbReference type="SignaLink" id="Q95TJ9"/>
<dbReference type="BioGRID-ORCS" id="43724">
    <property type="hits" value="0 hits in 3 CRISPR screens"/>
</dbReference>
<dbReference type="ChiTaRS" id="CycG">
    <property type="organism name" value="fly"/>
</dbReference>
<dbReference type="GenomeRNAi" id="43724"/>
<dbReference type="PRO" id="PR:Q95TJ9"/>
<dbReference type="Proteomes" id="UP000000803">
    <property type="component" value="Chromosome 3R"/>
</dbReference>
<dbReference type="Bgee" id="FBgn0039858">
    <property type="expression patterns" value="Expressed in adult midgut enterocyte in digestive tract and 296 other cell types or tissues"/>
</dbReference>
<dbReference type="GO" id="GO:0000307">
    <property type="term" value="C:cyclin-dependent protein kinase holoenzyme complex"/>
    <property type="evidence" value="ECO:0000318"/>
    <property type="project" value="GO_Central"/>
</dbReference>
<dbReference type="GO" id="GO:0005737">
    <property type="term" value="C:cytoplasm"/>
    <property type="evidence" value="ECO:0000318"/>
    <property type="project" value="GO_Central"/>
</dbReference>
<dbReference type="GO" id="GO:0005634">
    <property type="term" value="C:nucleus"/>
    <property type="evidence" value="ECO:0000318"/>
    <property type="project" value="GO_Central"/>
</dbReference>
<dbReference type="GO" id="GO:0005700">
    <property type="term" value="C:polytene chromosome"/>
    <property type="evidence" value="ECO:0000314"/>
    <property type="project" value="FlyBase"/>
</dbReference>
<dbReference type="GO" id="GO:0016538">
    <property type="term" value="F:cyclin-dependent protein serine/threonine kinase regulator activity"/>
    <property type="evidence" value="ECO:0000250"/>
    <property type="project" value="FlyBase"/>
</dbReference>
<dbReference type="GO" id="GO:0003677">
    <property type="term" value="F:DNA binding"/>
    <property type="evidence" value="ECO:0007669"/>
    <property type="project" value="UniProtKB-KW"/>
</dbReference>
<dbReference type="GO" id="GO:0004864">
    <property type="term" value="F:protein phosphatase inhibitor activity"/>
    <property type="evidence" value="ECO:0000353"/>
    <property type="project" value="FlyBase"/>
</dbReference>
<dbReference type="GO" id="GO:0051301">
    <property type="term" value="P:cell division"/>
    <property type="evidence" value="ECO:0007669"/>
    <property type="project" value="UniProtKB-KW"/>
</dbReference>
<dbReference type="GO" id="GO:0006302">
    <property type="term" value="P:double-strand break repair"/>
    <property type="evidence" value="ECO:0000315"/>
    <property type="project" value="FlyBase"/>
</dbReference>
<dbReference type="GO" id="GO:0060429">
    <property type="term" value="P:epithelium development"/>
    <property type="evidence" value="ECO:0000316"/>
    <property type="project" value="FlyBase"/>
</dbReference>
<dbReference type="GO" id="GO:0007143">
    <property type="term" value="P:female meiotic nuclear division"/>
    <property type="evidence" value="ECO:0000315"/>
    <property type="project" value="FlyBase"/>
</dbReference>
<dbReference type="GO" id="GO:0000082">
    <property type="term" value="P:G1/S transition of mitotic cell cycle"/>
    <property type="evidence" value="ECO:0000318"/>
    <property type="project" value="GO_Central"/>
</dbReference>
<dbReference type="GO" id="GO:0000711">
    <property type="term" value="P:meiotic DNA repair synthesis"/>
    <property type="evidence" value="ECO:0000315"/>
    <property type="project" value="FlyBase"/>
</dbReference>
<dbReference type="GO" id="GO:2000134">
    <property type="term" value="P:negative regulation of G1/S transition of mitotic cell cycle"/>
    <property type="evidence" value="ECO:0000316"/>
    <property type="project" value="FlyBase"/>
</dbReference>
<dbReference type="GO" id="GO:0045746">
    <property type="term" value="P:negative regulation of Notch signaling pathway"/>
    <property type="evidence" value="ECO:0000316"/>
    <property type="project" value="FlyBase"/>
</dbReference>
<dbReference type="GO" id="GO:0045927">
    <property type="term" value="P:positive regulation of growth"/>
    <property type="evidence" value="ECO:0000315"/>
    <property type="project" value="FlyBase"/>
</dbReference>
<dbReference type="GO" id="GO:0046628">
    <property type="term" value="P:positive regulation of insulin receptor signaling pathway"/>
    <property type="evidence" value="ECO:0000315"/>
    <property type="project" value="FlyBase"/>
</dbReference>
<dbReference type="GO" id="GO:0051897">
    <property type="term" value="P:positive regulation of phosphatidylinositol 3-kinase/protein kinase B signal transduction"/>
    <property type="evidence" value="ECO:0000315"/>
    <property type="project" value="FlyBase"/>
</dbReference>
<dbReference type="CDD" id="cd20523">
    <property type="entry name" value="CYCLIN_CCNG"/>
    <property type="match status" value="1"/>
</dbReference>
<dbReference type="FunFam" id="1.10.472.10:FF:000118">
    <property type="entry name" value="Cyclin g"/>
    <property type="match status" value="1"/>
</dbReference>
<dbReference type="Gene3D" id="1.10.472.10">
    <property type="entry name" value="Cyclin-like"/>
    <property type="match status" value="2"/>
</dbReference>
<dbReference type="InterPro" id="IPR039361">
    <property type="entry name" value="Cyclin"/>
</dbReference>
<dbReference type="InterPro" id="IPR013763">
    <property type="entry name" value="Cyclin-like_dom"/>
</dbReference>
<dbReference type="InterPro" id="IPR036915">
    <property type="entry name" value="Cyclin-like_sf"/>
</dbReference>
<dbReference type="InterPro" id="IPR006671">
    <property type="entry name" value="Cyclin_N"/>
</dbReference>
<dbReference type="PANTHER" id="PTHR10177">
    <property type="entry name" value="CYCLINS"/>
    <property type="match status" value="1"/>
</dbReference>
<dbReference type="Pfam" id="PF00134">
    <property type="entry name" value="Cyclin_N"/>
    <property type="match status" value="1"/>
</dbReference>
<dbReference type="SMART" id="SM00385">
    <property type="entry name" value="CYCLIN"/>
    <property type="match status" value="1"/>
</dbReference>
<dbReference type="SUPFAM" id="SSF47954">
    <property type="entry name" value="Cyclin-like"/>
    <property type="match status" value="1"/>
</dbReference>
<evidence type="ECO:0000255" key="1"/>
<evidence type="ECO:0000269" key="2">
    <source>
    </source>
</evidence>
<evidence type="ECO:0000269" key="3">
    <source>
    </source>
</evidence>
<evidence type="ECO:0000269" key="4">
    <source>
    </source>
</evidence>
<evidence type="ECO:0000269" key="5">
    <source>
    </source>
</evidence>
<evidence type="ECO:0000269" key="6">
    <source>
    </source>
</evidence>
<evidence type="ECO:0000269" key="7">
    <source>
    </source>
</evidence>
<evidence type="ECO:0000269" key="8">
    <source>
    </source>
</evidence>
<evidence type="ECO:0000269" key="9">
    <source>
    </source>
</evidence>
<evidence type="ECO:0000303" key="10">
    <source>
    </source>
</evidence>
<evidence type="ECO:0000305" key="11"/>
<evidence type="ECO:0000312" key="12">
    <source>
        <dbReference type="EMBL" id="AAL13949.1"/>
    </source>
</evidence>
<evidence type="ECO:0000312" key="13">
    <source>
        <dbReference type="FlyBase" id="FBgn0039858"/>
    </source>
</evidence>
<evidence type="ECO:0000312" key="14">
    <source>
        <dbReference type="Proteomes" id="UP000000803"/>
    </source>
</evidence>
<name>CYCG_DROME</name>
<gene>
    <name evidence="13" type="primary">CycG</name>
    <name evidence="13" type="ORF">CG11525</name>
</gene>
<feature type="chain" id="PRO_0000436049" description="Cyclin G" evidence="11">
    <location>
        <begin position="1"/>
        <end position="566"/>
    </location>
</feature>
<feature type="domain" description="Cyclin N-terminal" evidence="1">
    <location>
        <begin position="285"/>
        <end position="368"/>
    </location>
</feature>
<organism evidence="12">
    <name type="scientific">Drosophila melanogaster</name>
    <name type="common">Fruit fly</name>
    <dbReference type="NCBI Taxonomy" id="7227"/>
    <lineage>
        <taxon>Eukaryota</taxon>
        <taxon>Metazoa</taxon>
        <taxon>Ecdysozoa</taxon>
        <taxon>Arthropoda</taxon>
        <taxon>Hexapoda</taxon>
        <taxon>Insecta</taxon>
        <taxon>Pterygota</taxon>
        <taxon>Neoptera</taxon>
        <taxon>Endopterygota</taxon>
        <taxon>Diptera</taxon>
        <taxon>Brachycera</taxon>
        <taxon>Muscomorpha</taxon>
        <taxon>Ephydroidea</taxon>
        <taxon>Drosophilidae</taxon>
        <taxon>Drosophila</taxon>
        <taxon>Sophophora</taxon>
    </lineage>
</organism>
<accession>Q95TJ9</accession>
<sequence>MSVPVRYSSAAAEYAAEVDCELESTLQQQQQLHLQQQYEQYQHYQYQREQDIAYYCQLQAARQQEQLMQQRTSMSSSVMPGLALPQDHQDHPAALLNGPHNNNIGLAMDAHSINAILVDDEQPSTSAQAAAAAAASAGGSAGAGSGSGLGGAIGGGKLANGINRNAEMPTDWMRIADEGRYGTPGAAGLEYQKYEQQQQLEDLAESEAGAVGGASNNNGESSSSLKKLEDQLHALTSDELYETLKEYDVLQDKFHTVLLLPKESRREVTAGGRDGSAYVLRCLKMWYELPSDVLFSAMSLVDRFLDRMAVKPKHMACMSVASFHLAIKQLDLKPIPAEDLVTISQCGCTAGDLERMAGVIANKLGVQMGHAPITSVSYLRIYYALFRNLAKEIGGDFFKFYQQLIKLEELENRLEILMCDVKTTVITPSTLALVLICLHLDFHIKESYTRGSPELKHVFEYILFLQQYMRIPDRVFTCGFSIVSGILSHYNGQNKAPYKQRLVWKLSSRTLRVLRPINRFSSDLPTIEEGIPNALDDGLRSRTESISSEEEEDWPTSPIIPIFEQC</sequence>
<protein>
    <recommendedName>
        <fullName evidence="10">Cyclin G</fullName>
    </recommendedName>
</protein>